<keyword id="KW-0025">Alternative splicing</keyword>
<keyword id="KW-0256">Endoplasmic reticulum</keyword>
<keyword id="KW-0444">Lipid biosynthesis</keyword>
<keyword id="KW-0551">Lipid droplet</keyword>
<keyword id="KW-0443">Lipid metabolism</keyword>
<keyword id="KW-0521">NADP</keyword>
<keyword id="KW-0560">Oxidoreductase</keyword>
<keyword id="KW-1185">Reference proteome</keyword>
<keyword id="KW-0732">Signal</keyword>
<keyword id="KW-0752">Steroid biosynthesis</keyword>
<protein>
    <recommendedName>
        <fullName>Estradiol 17-beta-dehydrogenase 11</fullName>
        <ecNumber>1.1.1.62</ecNumber>
    </recommendedName>
    <alternativeName>
        <fullName>17-beta-hydroxysteroid dehydrogenase 11</fullName>
        <shortName>17-beta-HSD 11</shortName>
        <shortName>17bHSD11</shortName>
        <shortName>17betaHSD11</shortName>
    </alternativeName>
    <alternativeName>
        <fullName>17-beta-hydroxysteroid dehydrogenase XI</fullName>
        <shortName>17-beta-HSD XI</shortName>
        <shortName>17betaHSDXI</shortName>
    </alternativeName>
    <alternativeName>
        <fullName>Dehydrogenase/reductase SDR family member 8</fullName>
    </alternativeName>
</protein>
<feature type="signal peptide" evidence="2">
    <location>
        <begin position="1"/>
        <end position="21"/>
    </location>
</feature>
<feature type="chain" id="PRO_0000031971" description="Estradiol 17-beta-dehydrogenase 11">
    <location>
        <begin position="22"/>
        <end position="298"/>
    </location>
</feature>
<feature type="active site" description="Proton acceptor" evidence="1">
    <location>
        <position position="185"/>
    </location>
</feature>
<feature type="binding site" evidence="1">
    <location>
        <begin position="40"/>
        <end position="64"/>
    </location>
    <ligand>
        <name>NADP(+)</name>
        <dbReference type="ChEBI" id="CHEBI:58349"/>
    </ligand>
</feature>
<feature type="binding site" evidence="1">
    <location>
        <position position="172"/>
    </location>
    <ligand>
        <name>substrate</name>
    </ligand>
</feature>
<feature type="splice variant" id="VSP_015013" description="In isoform 2." evidence="5">
    <original>N</original>
    <variation>K</variation>
    <location>
        <position position="232"/>
    </location>
</feature>
<feature type="splice variant" id="VSP_015014" description="In isoform 2." evidence="5">
    <location>
        <begin position="233"/>
        <end position="298"/>
    </location>
</feature>
<dbReference type="EC" id="1.1.1.62"/>
<dbReference type="EMBL" id="AF304306">
    <property type="protein sequence ID" value="AAG41413.1"/>
    <property type="molecule type" value="mRNA"/>
</dbReference>
<dbReference type="EMBL" id="AY053570">
    <property type="protein sequence ID" value="AAL14859.1"/>
    <property type="molecule type" value="mRNA"/>
</dbReference>
<dbReference type="EMBL" id="AK049355">
    <property type="protein sequence ID" value="BAC33704.1"/>
    <property type="molecule type" value="mRNA"/>
</dbReference>
<dbReference type="EMBL" id="AK154803">
    <property type="protein sequence ID" value="BAE32840.1"/>
    <property type="molecule type" value="mRNA"/>
</dbReference>
<dbReference type="EMBL" id="AK155174">
    <property type="protein sequence ID" value="BAE33094.1"/>
    <property type="molecule type" value="mRNA"/>
</dbReference>
<dbReference type="EMBL" id="AK155202">
    <property type="protein sequence ID" value="BAE33115.1"/>
    <property type="molecule type" value="mRNA"/>
</dbReference>
<dbReference type="EMBL" id="AK155327">
    <property type="protein sequence ID" value="BAE33194.1"/>
    <property type="molecule type" value="mRNA"/>
</dbReference>
<dbReference type="EMBL" id="AK158327">
    <property type="protein sequence ID" value="BAE34459.1"/>
    <property type="molecule type" value="mRNA"/>
</dbReference>
<dbReference type="EMBL" id="AK170939">
    <property type="protein sequence ID" value="BAE42129.1"/>
    <property type="molecule type" value="mRNA"/>
</dbReference>
<dbReference type="EMBL" id="BC038340">
    <property type="protein sequence ID" value="AAH38340.1"/>
    <property type="molecule type" value="mRNA"/>
</dbReference>
<dbReference type="CCDS" id="CCDS19481.1">
    <molecule id="Q9EQ06-1"/>
</dbReference>
<dbReference type="RefSeq" id="NP_444492.1">
    <molecule id="Q9EQ06-1"/>
    <property type="nucleotide sequence ID" value="NM_053262.3"/>
</dbReference>
<dbReference type="SMR" id="Q9EQ06"/>
<dbReference type="BioGRID" id="227794">
    <property type="interactions" value="7"/>
</dbReference>
<dbReference type="FunCoup" id="Q9EQ06">
    <property type="interactions" value="937"/>
</dbReference>
<dbReference type="IntAct" id="Q9EQ06">
    <property type="interactions" value="1"/>
</dbReference>
<dbReference type="STRING" id="10090.ENSMUSP00000031251"/>
<dbReference type="GlyGen" id="Q9EQ06">
    <property type="glycosylation" value="1 site, 1 O-linked glycan (1 site)"/>
</dbReference>
<dbReference type="iPTMnet" id="Q9EQ06"/>
<dbReference type="PhosphoSitePlus" id="Q9EQ06"/>
<dbReference type="SwissPalm" id="Q9EQ06"/>
<dbReference type="jPOST" id="Q9EQ06"/>
<dbReference type="PaxDb" id="10090-ENSMUSP00000031251"/>
<dbReference type="PeptideAtlas" id="Q9EQ06"/>
<dbReference type="ProteomicsDB" id="279644">
    <molecule id="Q9EQ06-1"/>
</dbReference>
<dbReference type="ProteomicsDB" id="279645">
    <molecule id="Q9EQ06-2"/>
</dbReference>
<dbReference type="Pumba" id="Q9EQ06"/>
<dbReference type="Antibodypedia" id="14449">
    <property type="antibodies" value="188 antibodies from 27 providers"/>
</dbReference>
<dbReference type="DNASU" id="114664"/>
<dbReference type="Ensembl" id="ENSMUST00000031251.16">
    <molecule id="Q9EQ06-1"/>
    <property type="protein sequence ID" value="ENSMUSP00000031251.10"/>
    <property type="gene ID" value="ENSMUSG00000029311.17"/>
</dbReference>
<dbReference type="Ensembl" id="ENSMUST00000119025.2">
    <molecule id="Q9EQ06-2"/>
    <property type="protein sequence ID" value="ENSMUSP00000113455.2"/>
    <property type="gene ID" value="ENSMUSG00000029311.17"/>
</dbReference>
<dbReference type="GeneID" id="114664"/>
<dbReference type="KEGG" id="mmu:114664"/>
<dbReference type="UCSC" id="uc008yjy.1">
    <molecule id="Q9EQ06-1"/>
    <property type="organism name" value="mouse"/>
</dbReference>
<dbReference type="UCSC" id="uc008yjz.1">
    <molecule id="Q9EQ06-2"/>
    <property type="organism name" value="mouse"/>
</dbReference>
<dbReference type="AGR" id="MGI:2149821"/>
<dbReference type="CTD" id="51170"/>
<dbReference type="MGI" id="MGI:2149821">
    <property type="gene designation" value="Hsd17b11"/>
</dbReference>
<dbReference type="VEuPathDB" id="HostDB:ENSMUSG00000029311"/>
<dbReference type="eggNOG" id="KOG1201">
    <property type="taxonomic scope" value="Eukaryota"/>
</dbReference>
<dbReference type="GeneTree" id="ENSGT00940000160856"/>
<dbReference type="HOGENOM" id="CLU_010194_2_5_1"/>
<dbReference type="InParanoid" id="Q9EQ06"/>
<dbReference type="OMA" id="HYWLAQE"/>
<dbReference type="OrthoDB" id="10253736at2759"/>
<dbReference type="PhylomeDB" id="Q9EQ06"/>
<dbReference type="TreeFam" id="TF312837"/>
<dbReference type="Reactome" id="R-MMU-193144">
    <property type="pathway name" value="Estrogen biosynthesis"/>
</dbReference>
<dbReference type="BioGRID-ORCS" id="114664">
    <property type="hits" value="2 hits in 80 CRISPR screens"/>
</dbReference>
<dbReference type="ChiTaRS" id="Hsd17b13">
    <property type="organism name" value="mouse"/>
</dbReference>
<dbReference type="PRO" id="PR:Q9EQ06"/>
<dbReference type="Proteomes" id="UP000000589">
    <property type="component" value="Chromosome 5"/>
</dbReference>
<dbReference type="RNAct" id="Q9EQ06">
    <property type="molecule type" value="protein"/>
</dbReference>
<dbReference type="Bgee" id="ENSMUSG00000029311">
    <property type="expression patterns" value="Expressed in small intestine Peyer's patch and 260 other cell types or tissues"/>
</dbReference>
<dbReference type="GO" id="GO:0005783">
    <property type="term" value="C:endoplasmic reticulum"/>
    <property type="evidence" value="ECO:0007669"/>
    <property type="project" value="UniProtKB-SubCell"/>
</dbReference>
<dbReference type="GO" id="GO:0005811">
    <property type="term" value="C:lipid droplet"/>
    <property type="evidence" value="ECO:0007669"/>
    <property type="project" value="UniProtKB-SubCell"/>
</dbReference>
<dbReference type="GO" id="GO:0004303">
    <property type="term" value="F:estradiol 17-beta-dehydrogenase [NAD(P)+] activity"/>
    <property type="evidence" value="ECO:0007669"/>
    <property type="project" value="UniProtKB-EC"/>
</dbReference>
<dbReference type="GO" id="GO:0006710">
    <property type="term" value="P:androgen catabolic process"/>
    <property type="evidence" value="ECO:0007669"/>
    <property type="project" value="Ensembl"/>
</dbReference>
<dbReference type="GO" id="GO:0006694">
    <property type="term" value="P:steroid biosynthetic process"/>
    <property type="evidence" value="ECO:0007669"/>
    <property type="project" value="UniProtKB-KW"/>
</dbReference>
<dbReference type="CDD" id="cd05339">
    <property type="entry name" value="17beta-HSDXI-like_SDR_c"/>
    <property type="match status" value="1"/>
</dbReference>
<dbReference type="FunFam" id="3.40.50.720:FF:000224">
    <property type="entry name" value="Hydroxysteroid 17-beta dehydrogenase 11"/>
    <property type="match status" value="1"/>
</dbReference>
<dbReference type="Gene3D" id="3.40.50.720">
    <property type="entry name" value="NAD(P)-binding Rossmann-like Domain"/>
    <property type="match status" value="1"/>
</dbReference>
<dbReference type="InterPro" id="IPR036291">
    <property type="entry name" value="NAD(P)-bd_dom_sf"/>
</dbReference>
<dbReference type="InterPro" id="IPR002347">
    <property type="entry name" value="SDR_fam"/>
</dbReference>
<dbReference type="PANTHER" id="PTHR24322:SF489">
    <property type="entry name" value="ESTRADIOL 17-BETA-DEHYDROGENASE 11"/>
    <property type="match status" value="1"/>
</dbReference>
<dbReference type="PANTHER" id="PTHR24322">
    <property type="entry name" value="PKSB"/>
    <property type="match status" value="1"/>
</dbReference>
<dbReference type="Pfam" id="PF00106">
    <property type="entry name" value="adh_short"/>
    <property type="match status" value="1"/>
</dbReference>
<dbReference type="PRINTS" id="PR00081">
    <property type="entry name" value="GDHRDH"/>
</dbReference>
<dbReference type="PRINTS" id="PR00080">
    <property type="entry name" value="SDRFAMILY"/>
</dbReference>
<dbReference type="SUPFAM" id="SSF51735">
    <property type="entry name" value="NAD(P)-binding Rossmann-fold domains"/>
    <property type="match status" value="1"/>
</dbReference>
<reference key="1">
    <citation type="journal article" date="2001" name="Mol. Cell. Endocrinol.">
        <title>Pan1b (17betaHSD11)-enzymatic activity and distribution in the lung.</title>
        <authorList>
            <person name="Brereton P."/>
            <person name="Suzuki T."/>
            <person name="Sasano H."/>
            <person name="Li K."/>
            <person name="Duarte C."/>
            <person name="Obeyesekere V."/>
            <person name="Haeseleer F."/>
            <person name="Palczewski K."/>
            <person name="Smith I."/>
            <person name="Komesaroff P."/>
            <person name="Krozowski Z."/>
        </authorList>
    </citation>
    <scope>NUCLEOTIDE SEQUENCE [MRNA] (ISOFORM 1)</scope>
    <scope>ENZYME ACTIVITY IN VITRO</scope>
    <source>
        <strain>NIH Swiss</strain>
    </source>
</reference>
<reference key="2">
    <citation type="submission" date="2001-08" db="EMBL/GenBank/DDBJ databases">
        <authorList>
            <person name="Chen W."/>
            <person name="Napoli J."/>
        </authorList>
    </citation>
    <scope>NUCLEOTIDE SEQUENCE [MRNA] (ISOFORM 1)</scope>
    <source>
        <strain>BALB/cJ</strain>
    </source>
</reference>
<reference key="3">
    <citation type="journal article" date="2005" name="Science">
        <title>The transcriptional landscape of the mammalian genome.</title>
        <authorList>
            <person name="Carninci P."/>
            <person name="Kasukawa T."/>
            <person name="Katayama S."/>
            <person name="Gough J."/>
            <person name="Frith M.C."/>
            <person name="Maeda N."/>
            <person name="Oyama R."/>
            <person name="Ravasi T."/>
            <person name="Lenhard B."/>
            <person name="Wells C."/>
            <person name="Kodzius R."/>
            <person name="Shimokawa K."/>
            <person name="Bajic V.B."/>
            <person name="Brenner S.E."/>
            <person name="Batalov S."/>
            <person name="Forrest A.R."/>
            <person name="Zavolan M."/>
            <person name="Davis M.J."/>
            <person name="Wilming L.G."/>
            <person name="Aidinis V."/>
            <person name="Allen J.E."/>
            <person name="Ambesi-Impiombato A."/>
            <person name="Apweiler R."/>
            <person name="Aturaliya R.N."/>
            <person name="Bailey T.L."/>
            <person name="Bansal M."/>
            <person name="Baxter L."/>
            <person name="Beisel K.W."/>
            <person name="Bersano T."/>
            <person name="Bono H."/>
            <person name="Chalk A.M."/>
            <person name="Chiu K.P."/>
            <person name="Choudhary V."/>
            <person name="Christoffels A."/>
            <person name="Clutterbuck D.R."/>
            <person name="Crowe M.L."/>
            <person name="Dalla E."/>
            <person name="Dalrymple B.P."/>
            <person name="de Bono B."/>
            <person name="Della Gatta G."/>
            <person name="di Bernardo D."/>
            <person name="Down T."/>
            <person name="Engstrom P."/>
            <person name="Fagiolini M."/>
            <person name="Faulkner G."/>
            <person name="Fletcher C.F."/>
            <person name="Fukushima T."/>
            <person name="Furuno M."/>
            <person name="Futaki S."/>
            <person name="Gariboldi M."/>
            <person name="Georgii-Hemming P."/>
            <person name="Gingeras T.R."/>
            <person name="Gojobori T."/>
            <person name="Green R.E."/>
            <person name="Gustincich S."/>
            <person name="Harbers M."/>
            <person name="Hayashi Y."/>
            <person name="Hensch T.K."/>
            <person name="Hirokawa N."/>
            <person name="Hill D."/>
            <person name="Huminiecki L."/>
            <person name="Iacono M."/>
            <person name="Ikeo K."/>
            <person name="Iwama A."/>
            <person name="Ishikawa T."/>
            <person name="Jakt M."/>
            <person name="Kanapin A."/>
            <person name="Katoh M."/>
            <person name="Kawasawa Y."/>
            <person name="Kelso J."/>
            <person name="Kitamura H."/>
            <person name="Kitano H."/>
            <person name="Kollias G."/>
            <person name="Krishnan S.P."/>
            <person name="Kruger A."/>
            <person name="Kummerfeld S.K."/>
            <person name="Kurochkin I.V."/>
            <person name="Lareau L.F."/>
            <person name="Lazarevic D."/>
            <person name="Lipovich L."/>
            <person name="Liu J."/>
            <person name="Liuni S."/>
            <person name="McWilliam S."/>
            <person name="Madan Babu M."/>
            <person name="Madera M."/>
            <person name="Marchionni L."/>
            <person name="Matsuda H."/>
            <person name="Matsuzawa S."/>
            <person name="Miki H."/>
            <person name="Mignone F."/>
            <person name="Miyake S."/>
            <person name="Morris K."/>
            <person name="Mottagui-Tabar S."/>
            <person name="Mulder N."/>
            <person name="Nakano N."/>
            <person name="Nakauchi H."/>
            <person name="Ng P."/>
            <person name="Nilsson R."/>
            <person name="Nishiguchi S."/>
            <person name="Nishikawa S."/>
            <person name="Nori F."/>
            <person name="Ohara O."/>
            <person name="Okazaki Y."/>
            <person name="Orlando V."/>
            <person name="Pang K.C."/>
            <person name="Pavan W.J."/>
            <person name="Pavesi G."/>
            <person name="Pesole G."/>
            <person name="Petrovsky N."/>
            <person name="Piazza S."/>
            <person name="Reed J."/>
            <person name="Reid J.F."/>
            <person name="Ring B.Z."/>
            <person name="Ringwald M."/>
            <person name="Rost B."/>
            <person name="Ruan Y."/>
            <person name="Salzberg S.L."/>
            <person name="Sandelin A."/>
            <person name="Schneider C."/>
            <person name="Schoenbach C."/>
            <person name="Sekiguchi K."/>
            <person name="Semple C.A."/>
            <person name="Seno S."/>
            <person name="Sessa L."/>
            <person name="Sheng Y."/>
            <person name="Shibata Y."/>
            <person name="Shimada H."/>
            <person name="Shimada K."/>
            <person name="Silva D."/>
            <person name="Sinclair B."/>
            <person name="Sperling S."/>
            <person name="Stupka E."/>
            <person name="Sugiura K."/>
            <person name="Sultana R."/>
            <person name="Takenaka Y."/>
            <person name="Taki K."/>
            <person name="Tammoja K."/>
            <person name="Tan S.L."/>
            <person name="Tang S."/>
            <person name="Taylor M.S."/>
            <person name="Tegner J."/>
            <person name="Teichmann S.A."/>
            <person name="Ueda H.R."/>
            <person name="van Nimwegen E."/>
            <person name="Verardo R."/>
            <person name="Wei C.L."/>
            <person name="Yagi K."/>
            <person name="Yamanishi H."/>
            <person name="Zabarovsky E."/>
            <person name="Zhu S."/>
            <person name="Zimmer A."/>
            <person name="Hide W."/>
            <person name="Bult C."/>
            <person name="Grimmond S.M."/>
            <person name="Teasdale R.D."/>
            <person name="Liu E.T."/>
            <person name="Brusic V."/>
            <person name="Quackenbush J."/>
            <person name="Wahlestedt C."/>
            <person name="Mattick J.S."/>
            <person name="Hume D.A."/>
            <person name="Kai C."/>
            <person name="Sasaki D."/>
            <person name="Tomaru Y."/>
            <person name="Fukuda S."/>
            <person name="Kanamori-Katayama M."/>
            <person name="Suzuki M."/>
            <person name="Aoki J."/>
            <person name="Arakawa T."/>
            <person name="Iida J."/>
            <person name="Imamura K."/>
            <person name="Itoh M."/>
            <person name="Kato T."/>
            <person name="Kawaji H."/>
            <person name="Kawagashira N."/>
            <person name="Kawashima T."/>
            <person name="Kojima M."/>
            <person name="Kondo S."/>
            <person name="Konno H."/>
            <person name="Nakano K."/>
            <person name="Ninomiya N."/>
            <person name="Nishio T."/>
            <person name="Okada M."/>
            <person name="Plessy C."/>
            <person name="Shibata K."/>
            <person name="Shiraki T."/>
            <person name="Suzuki S."/>
            <person name="Tagami M."/>
            <person name="Waki K."/>
            <person name="Watahiki A."/>
            <person name="Okamura-Oho Y."/>
            <person name="Suzuki H."/>
            <person name="Kawai J."/>
            <person name="Hayashizaki Y."/>
        </authorList>
    </citation>
    <scope>NUCLEOTIDE SEQUENCE [LARGE SCALE MRNA] (ISOFORMS 1 AND 2)</scope>
    <source>
        <strain>C57BL/6J</strain>
        <strain>NOD</strain>
        <tissue>Corpora quadrigemina</tissue>
        <tissue>Dendritic cell</tissue>
        <tissue>Embryonic stem cell</tissue>
        <tissue>Inner ear</tissue>
    </source>
</reference>
<reference key="4">
    <citation type="journal article" date="2004" name="Genome Res.">
        <title>The status, quality, and expansion of the NIH full-length cDNA project: the Mammalian Gene Collection (MGC).</title>
        <authorList>
            <consortium name="The MGC Project Team"/>
        </authorList>
    </citation>
    <scope>NUCLEOTIDE SEQUENCE [LARGE SCALE MRNA] (ISOFORM 1)</scope>
    <source>
        <strain>FVB/N</strain>
        <tissue>Mammary gland</tissue>
    </source>
</reference>
<reference key="5">
    <citation type="journal article" date="2008" name="Biochem. Biophys. Res. Commun.">
        <title>17beta-Hydroxysteroid dehydrogenase type 13 is a liver-specific lipid droplet-associated protein.</title>
        <authorList>
            <person name="Horiguchi Y."/>
            <person name="Araki M."/>
            <person name="Motojima K."/>
        </authorList>
    </citation>
    <scope>SUBCELLULAR LOCATION</scope>
    <scope>TISSUE SPECIFICITY</scope>
</reference>
<reference key="6">
    <citation type="journal article" date="2010" name="Cell">
        <title>A tissue-specific atlas of mouse protein phosphorylation and expression.</title>
        <authorList>
            <person name="Huttlin E.L."/>
            <person name="Jedrychowski M.P."/>
            <person name="Elias J.E."/>
            <person name="Goswami T."/>
            <person name="Rad R."/>
            <person name="Beausoleil S.A."/>
            <person name="Villen J."/>
            <person name="Haas W."/>
            <person name="Sowa M.E."/>
            <person name="Gygi S.P."/>
        </authorList>
    </citation>
    <scope>IDENTIFICATION BY MASS SPECTROMETRY [LARGE SCALE ANALYSIS]</scope>
    <source>
        <tissue>Brain</tissue>
        <tissue>Heart</tissue>
        <tissue>Kidney</tissue>
        <tissue>Liver</tissue>
        <tissue>Lung</tissue>
        <tissue>Spleen</tissue>
        <tissue>Testis</tissue>
    </source>
</reference>
<name>DHB11_MOUSE</name>
<gene>
    <name type="primary">Hsd17b11</name>
    <name type="synonym">Dhrs8</name>
    <name type="synonym">Pan1b</name>
</gene>
<proteinExistence type="evidence at protein level"/>
<organism>
    <name type="scientific">Mus musculus</name>
    <name type="common">Mouse</name>
    <dbReference type="NCBI Taxonomy" id="10090"/>
    <lineage>
        <taxon>Eukaryota</taxon>
        <taxon>Metazoa</taxon>
        <taxon>Chordata</taxon>
        <taxon>Craniata</taxon>
        <taxon>Vertebrata</taxon>
        <taxon>Euteleostomi</taxon>
        <taxon>Mammalia</taxon>
        <taxon>Eutheria</taxon>
        <taxon>Euarchontoglires</taxon>
        <taxon>Glires</taxon>
        <taxon>Rodentia</taxon>
        <taxon>Myomorpha</taxon>
        <taxon>Muroidea</taxon>
        <taxon>Muridae</taxon>
        <taxon>Murinae</taxon>
        <taxon>Mus</taxon>
        <taxon>Mus</taxon>
    </lineage>
</organism>
<sequence length="298" mass="32881">MKYLLDLILLLPLLIVFSIESLVKLFIPKKKKSVAGEIVLITGAGHGIGRLTAYEFAKLNTKLVLWDINKNGIEETAAKCRKLGAQAHPFVVDCSQREEIYSAAKKVKEEVGDVSILVNNAGVVYTADLFATQDPQIEKTFEVNVLAHFWTTKAFLPVMMKNNHGHIVTVASAAGHTVVPFLLAYCSSKFAAVGFHRALTDELAALGRTGVRTSCLCPNFINTGFIKNPSTNLGPTLEPEEVVEHLMHGILTEKQMIFVPSSIALLTVLERIVPERFLQVLKHRINVKFDAVVGYKDK</sequence>
<evidence type="ECO:0000250" key="1"/>
<evidence type="ECO:0000255" key="2"/>
<evidence type="ECO:0000269" key="3">
    <source>
    </source>
</evidence>
<evidence type="ECO:0000269" key="4">
    <source>
    </source>
</evidence>
<evidence type="ECO:0000303" key="5">
    <source>
    </source>
</evidence>
<evidence type="ECO:0000305" key="6"/>
<evidence type="ECO:0000305" key="7">
    <source>
    </source>
</evidence>
<comment type="function">
    <text>Can convert androstan-3-alpha,17-beta-diol (3-alpha-diol) to androsterone in vitro, suggesting that it may participate in androgen metabolism during steroidogenesis. May act by metabolizing compounds that stimulate steroid synthesis and/or by generating metabolites that inhibit it. Has no activity toward DHEA (dehydroepiandrosterone), or A-dione (4-androste-3,17-dione), and only a slight activity toward testosterone to A-dione.</text>
</comment>
<comment type="catalytic activity">
    <reaction evidence="3">
        <text>17beta-estradiol + NAD(+) = estrone + NADH + H(+)</text>
        <dbReference type="Rhea" id="RHEA:24612"/>
        <dbReference type="ChEBI" id="CHEBI:15378"/>
        <dbReference type="ChEBI" id="CHEBI:16469"/>
        <dbReference type="ChEBI" id="CHEBI:17263"/>
        <dbReference type="ChEBI" id="CHEBI:57540"/>
        <dbReference type="ChEBI" id="CHEBI:57945"/>
        <dbReference type="EC" id="1.1.1.62"/>
    </reaction>
</comment>
<comment type="catalytic activity">
    <reaction evidence="3">
        <text>17beta-estradiol + NADP(+) = estrone + NADPH + H(+)</text>
        <dbReference type="Rhea" id="RHEA:24616"/>
        <dbReference type="ChEBI" id="CHEBI:15378"/>
        <dbReference type="ChEBI" id="CHEBI:16469"/>
        <dbReference type="ChEBI" id="CHEBI:17263"/>
        <dbReference type="ChEBI" id="CHEBI:57783"/>
        <dbReference type="ChEBI" id="CHEBI:58349"/>
        <dbReference type="EC" id="1.1.1.62"/>
    </reaction>
</comment>
<comment type="subcellular location">
    <subcellularLocation>
        <location evidence="7">Endoplasmic reticulum</location>
    </subcellularLocation>
    <subcellularLocation>
        <location evidence="4">Lipid droplet</location>
    </subcellularLocation>
    <text evidence="4">Redistributed from the endoplasmic reticulum to lipids droplets in the cell upon induction of lipids droplet formation.</text>
</comment>
<comment type="alternative products">
    <event type="alternative splicing"/>
    <isoform>
        <id>Q9EQ06-1</id>
        <name>1</name>
        <sequence type="displayed"/>
    </isoform>
    <isoform>
        <id>Q9EQ06-2</id>
        <name>2</name>
        <sequence type="described" ref="VSP_015013 VSP_015014"/>
    </isoform>
</comment>
<comment type="tissue specificity">
    <text evidence="4">Expressed in the liver (at protein level) (PubMed:18359291). Also expressed in the intestine and, at much lower levels, in the kidney (PubMed:18359291).</text>
</comment>
<comment type="similarity">
    <text evidence="6">Belongs to the short-chain dehydrogenases/reductases (SDR) family. 17-beta-HSD 3 subfamily.</text>
</comment>
<accession>Q9EQ06</accession>
<accession>Q3U2P6</accession>
<accession>Q8BR33</accession>
<accession>Q8C7S0</accession>